<sequence length="63" mass="7094">MMFRLTSVLLVIVLLNLVVLTNACHMDCSKMICCSGICCFYCGLPSCDDTRRALLQRLLGHQR</sequence>
<name>I2B1_CONLT</name>
<reference key="1">
    <citation type="journal article" date="2009" name="Peptides">
        <title>Identification of novel I-superfamily conopeptides from several clades of Conus species found in the South China Sea.</title>
        <authorList>
            <person name="Liu Z."/>
            <person name="Xu N."/>
            <person name="Hu J."/>
            <person name="Zhao C."/>
            <person name="Yu Z."/>
            <person name="Dai Q."/>
        </authorList>
    </citation>
    <scope>NUCLEOTIDE SEQUENCE [MRNA]</scope>
    <source>
        <tissue>Venom duct</tissue>
    </source>
</reference>
<protein>
    <recommendedName>
        <fullName evidence="3">Conotoxin Lt11.1</fullName>
    </recommendedName>
</protein>
<organism>
    <name type="scientific">Conus litteratus</name>
    <name type="common">Lettered cone</name>
    <dbReference type="NCBI Taxonomy" id="89445"/>
    <lineage>
        <taxon>Eukaryota</taxon>
        <taxon>Metazoa</taxon>
        <taxon>Spiralia</taxon>
        <taxon>Lophotrochozoa</taxon>
        <taxon>Mollusca</taxon>
        <taxon>Gastropoda</taxon>
        <taxon>Caenogastropoda</taxon>
        <taxon>Neogastropoda</taxon>
        <taxon>Conoidea</taxon>
        <taxon>Conidae</taxon>
        <taxon>Conus</taxon>
        <taxon>Elisaconus</taxon>
    </lineage>
</organism>
<proteinExistence type="inferred from homology"/>
<feature type="signal peptide" evidence="1">
    <location>
        <begin position="1"/>
        <end position="23"/>
    </location>
</feature>
<feature type="peptide" id="PRO_0000392051" description="Conotoxin Lt11.1">
    <location>
        <begin position="24"/>
        <end position="50"/>
    </location>
</feature>
<feature type="propeptide" id="PRO_0000392052" evidence="1">
    <location>
        <begin position="53"/>
        <end position="63"/>
    </location>
</feature>
<feature type="disulfide bond" evidence="2">
    <location>
        <begin position="24"/>
        <end position="34"/>
    </location>
</feature>
<feature type="disulfide bond" evidence="2">
    <location>
        <begin position="28"/>
        <end position="39"/>
    </location>
</feature>
<feature type="disulfide bond" evidence="2">
    <location>
        <begin position="33"/>
        <end position="42"/>
    </location>
</feature>
<feature type="disulfide bond" evidence="2">
    <location>
        <begin position="38"/>
        <end position="47"/>
    </location>
</feature>
<dbReference type="EMBL" id="GQ180869">
    <property type="protein sequence ID" value="ACU30731.1"/>
    <property type="molecule type" value="mRNA"/>
</dbReference>
<dbReference type="GO" id="GO:0005576">
    <property type="term" value="C:extracellular region"/>
    <property type="evidence" value="ECO:0007669"/>
    <property type="project" value="UniProtKB-SubCell"/>
</dbReference>
<dbReference type="GO" id="GO:0090729">
    <property type="term" value="F:toxin activity"/>
    <property type="evidence" value="ECO:0007669"/>
    <property type="project" value="UniProtKB-KW"/>
</dbReference>
<accession>C7DQC1</accession>
<evidence type="ECO:0000250" key="1"/>
<evidence type="ECO:0000250" key="2">
    <source>
        <dbReference type="UniProtKB" id="Q7Z094"/>
    </source>
</evidence>
<evidence type="ECO:0000303" key="3">
    <source>
    </source>
</evidence>
<evidence type="ECO:0000305" key="4"/>
<evidence type="ECO:0000305" key="5">
    <source>
    </source>
</evidence>
<comment type="subcellular location">
    <subcellularLocation>
        <location evidence="5">Secreted</location>
    </subcellularLocation>
</comment>
<comment type="tissue specificity">
    <text evidence="5">Expressed by the venom duct.</text>
</comment>
<comment type="domain">
    <text evidence="4">The cysteine framework is XI (C-C-CC-CC-C-C).</text>
</comment>
<comment type="similarity">
    <text evidence="4">Belongs to the conotoxin I2 superfamily.</text>
</comment>
<keyword id="KW-0165">Cleavage on pair of basic residues</keyword>
<keyword id="KW-1015">Disulfide bond</keyword>
<keyword id="KW-0964">Secreted</keyword>
<keyword id="KW-0732">Signal</keyword>
<keyword id="KW-0800">Toxin</keyword>